<comment type="function">
    <text evidence="2">Transaldolase is important for the balance of metabolites in the pentose-phosphate pathway.</text>
</comment>
<comment type="catalytic activity">
    <reaction evidence="2">
        <text>D-sedoheptulose 7-phosphate + D-glyceraldehyde 3-phosphate = D-erythrose 4-phosphate + beta-D-fructose 6-phosphate</text>
        <dbReference type="Rhea" id="RHEA:17053"/>
        <dbReference type="ChEBI" id="CHEBI:16897"/>
        <dbReference type="ChEBI" id="CHEBI:57483"/>
        <dbReference type="ChEBI" id="CHEBI:57634"/>
        <dbReference type="ChEBI" id="CHEBI:59776"/>
        <dbReference type="EC" id="2.2.1.2"/>
    </reaction>
</comment>
<comment type="pathway">
    <text evidence="2">Carbohydrate degradation; pentose phosphate pathway; D-glyceraldehyde 3-phosphate and beta-D-fructose 6-phosphate from D-ribose 5-phosphate and D-xylulose 5-phosphate (non-oxidative stage): step 2/3.</text>
</comment>
<comment type="subunit">
    <text evidence="1">Homodimer.</text>
</comment>
<comment type="subcellular location">
    <subcellularLocation>
        <location evidence="2">Cytoplasm</location>
    </subcellularLocation>
</comment>
<comment type="similarity">
    <text evidence="2">Belongs to the transaldolase family. Type 1 subfamily.</text>
</comment>
<proteinExistence type="inferred from homology"/>
<accession>Q8ZN83</accession>
<dbReference type="EC" id="2.2.1.2" evidence="2"/>
<dbReference type="EMBL" id="AE006468">
    <property type="protein sequence ID" value="AAL21367.1"/>
    <property type="molecule type" value="Genomic_DNA"/>
</dbReference>
<dbReference type="RefSeq" id="NP_461408.1">
    <property type="nucleotide sequence ID" value="NC_003197.2"/>
</dbReference>
<dbReference type="SMR" id="Q8ZN83"/>
<dbReference type="STRING" id="99287.STM2473"/>
<dbReference type="PaxDb" id="99287-STM2473"/>
<dbReference type="GeneID" id="1253995"/>
<dbReference type="KEGG" id="stm:STM2473"/>
<dbReference type="PATRIC" id="fig|99287.12.peg.2611"/>
<dbReference type="HOGENOM" id="CLU_047470_0_1_6"/>
<dbReference type="OMA" id="ITCNITL"/>
<dbReference type="PhylomeDB" id="Q8ZN83"/>
<dbReference type="BioCyc" id="SENT99287:STM2473-MONOMER"/>
<dbReference type="UniPathway" id="UPA00115">
    <property type="reaction ID" value="UER00414"/>
</dbReference>
<dbReference type="Proteomes" id="UP000001014">
    <property type="component" value="Chromosome"/>
</dbReference>
<dbReference type="GO" id="GO:0005829">
    <property type="term" value="C:cytosol"/>
    <property type="evidence" value="ECO:0000318"/>
    <property type="project" value="GO_Central"/>
</dbReference>
<dbReference type="GO" id="GO:0004801">
    <property type="term" value="F:transaldolase activity"/>
    <property type="evidence" value="ECO:0000250"/>
    <property type="project" value="UniProtKB"/>
</dbReference>
<dbReference type="GO" id="GO:0005975">
    <property type="term" value="P:carbohydrate metabolic process"/>
    <property type="evidence" value="ECO:0007669"/>
    <property type="project" value="InterPro"/>
</dbReference>
<dbReference type="GO" id="GO:0009052">
    <property type="term" value="P:pentose-phosphate shunt, non-oxidative branch"/>
    <property type="evidence" value="ECO:0000318"/>
    <property type="project" value="GO_Central"/>
</dbReference>
<dbReference type="CDD" id="cd00957">
    <property type="entry name" value="Transaldolase_TalAB"/>
    <property type="match status" value="1"/>
</dbReference>
<dbReference type="FunFam" id="3.20.20.70:FF:000002">
    <property type="entry name" value="Transaldolase"/>
    <property type="match status" value="1"/>
</dbReference>
<dbReference type="Gene3D" id="3.20.20.70">
    <property type="entry name" value="Aldolase class I"/>
    <property type="match status" value="1"/>
</dbReference>
<dbReference type="HAMAP" id="MF_00492">
    <property type="entry name" value="Transaldolase_1"/>
    <property type="match status" value="1"/>
</dbReference>
<dbReference type="InterPro" id="IPR013785">
    <property type="entry name" value="Aldolase_TIM"/>
</dbReference>
<dbReference type="InterPro" id="IPR001585">
    <property type="entry name" value="TAL/FSA"/>
</dbReference>
<dbReference type="InterPro" id="IPR004730">
    <property type="entry name" value="Transaldolase_1"/>
</dbReference>
<dbReference type="InterPro" id="IPR018225">
    <property type="entry name" value="Transaldolase_AS"/>
</dbReference>
<dbReference type="NCBIfam" id="NF009001">
    <property type="entry name" value="PRK12346.1"/>
    <property type="match status" value="1"/>
</dbReference>
<dbReference type="NCBIfam" id="TIGR00874">
    <property type="entry name" value="talAB"/>
    <property type="match status" value="1"/>
</dbReference>
<dbReference type="PANTHER" id="PTHR10683">
    <property type="entry name" value="TRANSALDOLASE"/>
    <property type="match status" value="1"/>
</dbReference>
<dbReference type="PANTHER" id="PTHR10683:SF16">
    <property type="entry name" value="TRANSALDOLASE A"/>
    <property type="match status" value="1"/>
</dbReference>
<dbReference type="Pfam" id="PF00923">
    <property type="entry name" value="TAL_FSA"/>
    <property type="match status" value="1"/>
</dbReference>
<dbReference type="SUPFAM" id="SSF51569">
    <property type="entry name" value="Aldolase"/>
    <property type="match status" value="1"/>
</dbReference>
<dbReference type="PROSITE" id="PS01054">
    <property type="entry name" value="TRANSALDOLASE_1"/>
    <property type="match status" value="1"/>
</dbReference>
<keyword id="KW-0963">Cytoplasm</keyword>
<keyword id="KW-0570">Pentose shunt</keyword>
<keyword id="KW-1185">Reference proteome</keyword>
<keyword id="KW-0704">Schiff base</keyword>
<keyword id="KW-0808">Transferase</keyword>
<protein>
    <recommendedName>
        <fullName evidence="2">Transaldolase A</fullName>
        <ecNumber evidence="2">2.2.1.2</ecNumber>
    </recommendedName>
</protein>
<organism>
    <name type="scientific">Salmonella typhimurium (strain LT2 / SGSC1412 / ATCC 700720)</name>
    <dbReference type="NCBI Taxonomy" id="99287"/>
    <lineage>
        <taxon>Bacteria</taxon>
        <taxon>Pseudomonadati</taxon>
        <taxon>Pseudomonadota</taxon>
        <taxon>Gammaproteobacteria</taxon>
        <taxon>Enterobacterales</taxon>
        <taxon>Enterobacteriaceae</taxon>
        <taxon>Salmonella</taxon>
    </lineage>
</organism>
<sequence>MNQLDGIKQFTTVVADSGDIESIRHYQPQDATTNPSLLLKAAGLEQYGHLIEDAIAWGKKHGGTQEQQVAAASDKLAVNFGAEILKSIPGRVSTEVDARLSFDKEKSIEKARHLVDLYQQQGVDKSRILIKLAATWEGIRAAGQLEKEGINCNLTLLFSFAQARACAEAGVYLISPFVGRIYDWYQARSPLEPYVVEEDPGVKSVRNIYDYFKQHRYETIVMGASFRRTEQILALTGCDRLTISPNLLKELKEKEEPVIRKLVPSSQMFHRPTPMTEAEFRWEHNQDAMAVEKLSEGIRLFAVDQRKLEDLLAAKL</sequence>
<name>TALA_SALTY</name>
<evidence type="ECO:0000250" key="1"/>
<evidence type="ECO:0000255" key="2">
    <source>
        <dbReference type="HAMAP-Rule" id="MF_00492"/>
    </source>
</evidence>
<gene>
    <name evidence="2" type="primary">talA</name>
    <name type="ordered locus">STM2473</name>
</gene>
<feature type="chain" id="PRO_0000173612" description="Transaldolase A">
    <location>
        <begin position="1"/>
        <end position="316"/>
    </location>
</feature>
<feature type="active site" description="Schiff-base intermediate with substrate" evidence="2">
    <location>
        <position position="131"/>
    </location>
</feature>
<reference key="1">
    <citation type="journal article" date="2001" name="Nature">
        <title>Complete genome sequence of Salmonella enterica serovar Typhimurium LT2.</title>
        <authorList>
            <person name="McClelland M."/>
            <person name="Sanderson K.E."/>
            <person name="Spieth J."/>
            <person name="Clifton S.W."/>
            <person name="Latreille P."/>
            <person name="Courtney L."/>
            <person name="Porwollik S."/>
            <person name="Ali J."/>
            <person name="Dante M."/>
            <person name="Du F."/>
            <person name="Hou S."/>
            <person name="Layman D."/>
            <person name="Leonard S."/>
            <person name="Nguyen C."/>
            <person name="Scott K."/>
            <person name="Holmes A."/>
            <person name="Grewal N."/>
            <person name="Mulvaney E."/>
            <person name="Ryan E."/>
            <person name="Sun H."/>
            <person name="Florea L."/>
            <person name="Miller W."/>
            <person name="Stoneking T."/>
            <person name="Nhan M."/>
            <person name="Waterston R."/>
            <person name="Wilson R.K."/>
        </authorList>
    </citation>
    <scope>NUCLEOTIDE SEQUENCE [LARGE SCALE GENOMIC DNA]</scope>
    <source>
        <strain>LT2 / SGSC1412 / ATCC 700720</strain>
    </source>
</reference>